<organism>
    <name type="scientific">Shouchella clausii</name>
    <name type="common">Alkalihalobacillus clausii</name>
    <dbReference type="NCBI Taxonomy" id="79880"/>
    <lineage>
        <taxon>Bacteria</taxon>
        <taxon>Bacillati</taxon>
        <taxon>Bacillota</taxon>
        <taxon>Bacilli</taxon>
        <taxon>Bacillales</taxon>
        <taxon>Bacillaceae</taxon>
        <taxon>Shouchella</taxon>
    </lineage>
</organism>
<comment type="cofactor">
    <cofactor evidence="1">
        <name>Ca(2+)</name>
        <dbReference type="ChEBI" id="CHEBI:29108"/>
    </cofactor>
    <text evidence="1">Binds 2 calcium ions per subunit.</text>
</comment>
<comment type="subcellular location">
    <subcellularLocation>
        <location>Secreted</location>
    </subcellularLocation>
</comment>
<comment type="similarity">
    <text evidence="5">Belongs to the peptidase S8 family.</text>
</comment>
<evidence type="ECO:0000250" key="1"/>
<evidence type="ECO:0000255" key="2"/>
<evidence type="ECO:0000255" key="3">
    <source>
        <dbReference type="PROSITE-ProRule" id="PRU01240"/>
    </source>
</evidence>
<evidence type="ECO:0000269" key="4">
    <source ref="2"/>
</evidence>
<evidence type="ECO:0000305" key="5"/>
<proteinExistence type="evidence at protein level"/>
<name>ELYA_SHOCL</name>
<sequence>MKKPLGKIVASTALLISVAFSSSIASAAEEAKEKYLIGFNEQEAVSEFVEQVEANDEVAILSEEEEVEIELLHEFETIPVLSVELSPEDVDALELDPAISYIEEDAEVTTMAQSVPWGISRVQAPAAHNRGLTGSGVKVAVLDTGISTHPDLNIRGGASFVPGEPSTQDGNGHGTHVAGTIAALNNSIGVLGVAPSAELYAVKVLGASGSGSVSSIAQGLEWAGNNGMHVANLSLGSPSPSATLEQAVNSATSRGVLVVAASGNSGAGSISYPARYANAMAVGATDQNNNRASFSQYGAGLDIVAPGVNVQSTYPGSTYASLNGTSMATPHVAGAAALVKQKNPSWSNVQIRNHLKNTATSLGSTNLYGSGLVNAEAATR</sequence>
<keyword id="KW-0106">Calcium</keyword>
<keyword id="KW-0903">Direct protein sequencing</keyword>
<keyword id="KW-0378">Hydrolase</keyword>
<keyword id="KW-0479">Metal-binding</keyword>
<keyword id="KW-0645">Protease</keyword>
<keyword id="KW-0964">Secreted</keyword>
<keyword id="KW-0720">Serine protease</keyword>
<keyword id="KW-0732">Signal</keyword>
<keyword id="KW-0865">Zymogen</keyword>
<protein>
    <recommendedName>
        <fullName>Alkaline protease</fullName>
        <ecNumber>3.4.21.-</ecNumber>
    </recommendedName>
</protein>
<dbReference type="EC" id="3.4.21.-"/>
<dbReference type="EMBL" id="S48754">
    <property type="protein sequence ID" value="AAC60420.1"/>
    <property type="molecule type" value="Genomic_DNA"/>
</dbReference>
<dbReference type="EMBL" id="D13157">
    <property type="protein sequence ID" value="BAA02442.1"/>
    <property type="molecule type" value="Genomic_DNA"/>
</dbReference>
<dbReference type="RefSeq" id="WP_094423791.1">
    <property type="nucleotide sequence ID" value="NZ_CP019985.1"/>
</dbReference>
<dbReference type="SMR" id="P41362"/>
<dbReference type="MEROPS" id="S08.003"/>
<dbReference type="GeneID" id="86924825"/>
<dbReference type="GO" id="GO:0005576">
    <property type="term" value="C:extracellular region"/>
    <property type="evidence" value="ECO:0007669"/>
    <property type="project" value="UniProtKB-SubCell"/>
</dbReference>
<dbReference type="GO" id="GO:0046872">
    <property type="term" value="F:metal ion binding"/>
    <property type="evidence" value="ECO:0007669"/>
    <property type="project" value="UniProtKB-KW"/>
</dbReference>
<dbReference type="GO" id="GO:0004252">
    <property type="term" value="F:serine-type endopeptidase activity"/>
    <property type="evidence" value="ECO:0007669"/>
    <property type="project" value="InterPro"/>
</dbReference>
<dbReference type="GO" id="GO:0006508">
    <property type="term" value="P:proteolysis"/>
    <property type="evidence" value="ECO:0007669"/>
    <property type="project" value="UniProtKB-KW"/>
</dbReference>
<dbReference type="CDD" id="cd07477">
    <property type="entry name" value="Peptidases_S8_Subtilisin_subset"/>
    <property type="match status" value="1"/>
</dbReference>
<dbReference type="Gene3D" id="3.30.70.80">
    <property type="entry name" value="Peptidase S8 propeptide/proteinase inhibitor I9"/>
    <property type="match status" value="1"/>
</dbReference>
<dbReference type="Gene3D" id="3.40.50.200">
    <property type="entry name" value="Peptidase S8/S53 domain"/>
    <property type="match status" value="1"/>
</dbReference>
<dbReference type="InterPro" id="IPR000209">
    <property type="entry name" value="Peptidase_S8/S53_dom"/>
</dbReference>
<dbReference type="InterPro" id="IPR036852">
    <property type="entry name" value="Peptidase_S8/S53_dom_sf"/>
</dbReference>
<dbReference type="InterPro" id="IPR023827">
    <property type="entry name" value="Peptidase_S8_Asp-AS"/>
</dbReference>
<dbReference type="InterPro" id="IPR022398">
    <property type="entry name" value="Peptidase_S8_His-AS"/>
</dbReference>
<dbReference type="InterPro" id="IPR023828">
    <property type="entry name" value="Peptidase_S8_Ser-AS"/>
</dbReference>
<dbReference type="InterPro" id="IPR050131">
    <property type="entry name" value="Peptidase_S8_subtilisin-like"/>
</dbReference>
<dbReference type="InterPro" id="IPR015500">
    <property type="entry name" value="Peptidase_S8_subtilisin-rel"/>
</dbReference>
<dbReference type="InterPro" id="IPR010259">
    <property type="entry name" value="S8pro/Inhibitor_I9"/>
</dbReference>
<dbReference type="InterPro" id="IPR037045">
    <property type="entry name" value="S8pro/Inhibitor_I9_sf"/>
</dbReference>
<dbReference type="InterPro" id="IPR034202">
    <property type="entry name" value="Subtilisin_Carlsberg-like"/>
</dbReference>
<dbReference type="PANTHER" id="PTHR43806:SF11">
    <property type="entry name" value="CEREVISIN-RELATED"/>
    <property type="match status" value="1"/>
</dbReference>
<dbReference type="PANTHER" id="PTHR43806">
    <property type="entry name" value="PEPTIDASE S8"/>
    <property type="match status" value="1"/>
</dbReference>
<dbReference type="Pfam" id="PF05922">
    <property type="entry name" value="Inhibitor_I9"/>
    <property type="match status" value="1"/>
</dbReference>
<dbReference type="Pfam" id="PF00082">
    <property type="entry name" value="Peptidase_S8"/>
    <property type="match status" value="1"/>
</dbReference>
<dbReference type="PRINTS" id="PR00723">
    <property type="entry name" value="SUBTILISIN"/>
</dbReference>
<dbReference type="SUPFAM" id="SSF54897">
    <property type="entry name" value="Protease propeptides/inhibitors"/>
    <property type="match status" value="1"/>
</dbReference>
<dbReference type="SUPFAM" id="SSF52743">
    <property type="entry name" value="Subtilisin-like"/>
    <property type="match status" value="1"/>
</dbReference>
<dbReference type="PROSITE" id="PS51892">
    <property type="entry name" value="SUBTILASE"/>
    <property type="match status" value="1"/>
</dbReference>
<dbReference type="PROSITE" id="PS00136">
    <property type="entry name" value="SUBTILASE_ASP"/>
    <property type="match status" value="1"/>
</dbReference>
<dbReference type="PROSITE" id="PS00137">
    <property type="entry name" value="SUBTILASE_HIS"/>
    <property type="match status" value="1"/>
</dbReference>
<dbReference type="PROSITE" id="PS00138">
    <property type="entry name" value="SUBTILASE_SER"/>
    <property type="match status" value="1"/>
</dbReference>
<reference key="1">
    <citation type="journal article" date="1992" name="Biosci. Biotechnol. Biochem.">
        <title>Molecular cloning, nucleotide sequence, and expression of the structural gene for alkaline serine protease from alkaliphilic Bacillus sp. 221.</title>
        <authorList>
            <person name="Takami H."/>
            <person name="Kobayashi T."/>
            <person name="Kobayashi M."/>
            <person name="Yamamoto M."/>
            <person name="Nakamura S."/>
            <person name="Aono R."/>
            <person name="Horikoshi K."/>
        </authorList>
    </citation>
    <scope>NUCLEOTIDE SEQUENCE [GENOMIC DNA]</scope>
    <source>
        <strain>ATCC 21522 / DSM 2512 / JCM 9139 / LMG 18518 / 221</strain>
    </source>
</reference>
<reference key="2">
    <citation type="book" date="1991" name="Microorganisms in alkaline evironments">
        <editorList>
            <person name="Horikoshi K."/>
        </editorList>
        <authorList>
            <person name="Horikoshi K."/>
        </authorList>
    </citation>
    <scope>PROTEIN SEQUENCE OF 112-129</scope>
    <source>
        <strain>ATCC 21522 / DSM 2512 / JCM 9139 / LMG 18518 / 221</strain>
    </source>
</reference>
<accession>P41362</accession>
<feature type="signal peptide" evidence="2">
    <location>
        <begin position="1"/>
        <end position="27"/>
    </location>
</feature>
<feature type="propeptide" id="PRO_0000027010" evidence="4">
    <location>
        <begin position="28"/>
        <end position="111"/>
    </location>
</feature>
<feature type="chain" id="PRO_0000027011" description="Alkaline protease">
    <location>
        <begin position="112"/>
        <end position="380"/>
    </location>
</feature>
<feature type="domain" description="Inhibitor I9" evidence="2">
    <location>
        <begin position="34"/>
        <end position="111"/>
    </location>
</feature>
<feature type="domain" description="Peptidase S8" evidence="3">
    <location>
        <begin position="116"/>
        <end position="379"/>
    </location>
</feature>
<feature type="active site" description="Charge relay system" evidence="3">
    <location>
        <position position="143"/>
    </location>
</feature>
<feature type="active site" description="Charge relay system" evidence="3">
    <location>
        <position position="173"/>
    </location>
</feature>
<feature type="active site" description="Charge relay system" evidence="3">
    <location>
        <position position="326"/>
    </location>
</feature>
<feature type="binding site" evidence="1">
    <location>
        <position position="113"/>
    </location>
    <ligand>
        <name>Ca(2+)</name>
        <dbReference type="ChEBI" id="CHEBI:29108"/>
        <label>1</label>
    </ligand>
</feature>
<feature type="binding site" evidence="1">
    <location>
        <position position="151"/>
    </location>
    <ligand>
        <name>Ca(2+)</name>
        <dbReference type="ChEBI" id="CHEBI:29108"/>
        <label>1</label>
    </ligand>
</feature>
<feature type="binding site" evidence="1">
    <location>
        <position position="184"/>
    </location>
    <ligand>
        <name>Ca(2+)</name>
        <dbReference type="ChEBI" id="CHEBI:29108"/>
        <label>1</label>
    </ligand>
</feature>
<feature type="binding site" evidence="1">
    <location>
        <position position="186"/>
    </location>
    <ligand>
        <name>Ca(2+)</name>
        <dbReference type="ChEBI" id="CHEBI:29108"/>
        <label>1</label>
    </ligand>
</feature>
<feature type="binding site" evidence="1">
    <location>
        <position position="188"/>
    </location>
    <ligand>
        <name>Ca(2+)</name>
        <dbReference type="ChEBI" id="CHEBI:29108"/>
        <label>1</label>
    </ligand>
</feature>
<feature type="binding site" evidence="1">
    <location>
        <position position="190"/>
    </location>
    <ligand>
        <name>Ca(2+)</name>
        <dbReference type="ChEBI" id="CHEBI:29108"/>
        <label>1</label>
    </ligand>
</feature>
<feature type="binding site" evidence="1">
    <location>
        <position position="274"/>
    </location>
    <ligand>
        <name>Ca(2+)</name>
        <dbReference type="ChEBI" id="CHEBI:29108"/>
        <label>2</label>
    </ligand>
</feature>
<feature type="binding site" evidence="1">
    <location>
        <position position="276"/>
    </location>
    <ligand>
        <name>Ca(2+)</name>
        <dbReference type="ChEBI" id="CHEBI:29108"/>
        <label>2</label>
    </ligand>
</feature>
<feature type="binding site" evidence="1">
    <location>
        <position position="279"/>
    </location>
    <ligand>
        <name>Ca(2+)</name>
        <dbReference type="ChEBI" id="CHEBI:29108"/>
        <label>2</label>
    </ligand>
</feature>